<organism>
    <name type="scientific">Sulfolobus islandicus filamentous virus (isolate Iceland/Hveragerdi)</name>
    <name type="common">SIFV</name>
    <dbReference type="NCBI Taxonomy" id="654908"/>
    <lineage>
        <taxon>Viruses</taxon>
        <taxon>Adnaviria</taxon>
        <taxon>Zilligvirae</taxon>
        <taxon>Taleaviricota</taxon>
        <taxon>Tokiviricetes</taxon>
        <taxon>Ligamenvirales</taxon>
        <taxon>Lipothrixviridae</taxon>
        <taxon>Betalipothrixvirus</taxon>
        <taxon>Sulfolobus islandicus filamentous virus</taxon>
    </lineage>
</organism>
<accession>Q914M5</accession>
<reference key="1">
    <citation type="journal article" date="2000" name="Virology">
        <title>A novel lipothrixvirus, SIFV, of the extremely thermophilic crenarchaeon Sulfolobus.</title>
        <authorList>
            <person name="Arnold H.P."/>
            <person name="Zillig W."/>
            <person name="Ziese U."/>
            <person name="Holz I."/>
            <person name="Crosby M."/>
            <person name="Utterback T."/>
            <person name="Weidmann J.F."/>
            <person name="Umayam L.A."/>
            <person name="Teffera K."/>
            <person name="Kristjanson J.K."/>
            <person name="Klenk H.P."/>
            <person name="Nelson K.E."/>
            <person name="Fraser C.M."/>
        </authorList>
    </citation>
    <scope>NUCLEOTIDE SEQUENCE [GENOMIC DNA]</scope>
</reference>
<feature type="chain" id="PRO_0000385387" description="Uncharacterized protein 5">
    <location>
        <begin position="1"/>
        <end position="97"/>
    </location>
</feature>
<protein>
    <recommendedName>
        <fullName>Uncharacterized protein 5</fullName>
    </recommendedName>
</protein>
<organismHost>
    <name type="scientific">Saccharolobus islandicus</name>
    <name type="common">Sulfolobus islandicus</name>
    <dbReference type="NCBI Taxonomy" id="43080"/>
</organismHost>
<name>Y005_SIFVH</name>
<keyword id="KW-1185">Reference proteome</keyword>
<dbReference type="EMBL" id="AF440571">
    <property type="protein sequence ID" value="AAL27716.1"/>
    <property type="molecule type" value="Genomic_DNA"/>
</dbReference>
<dbReference type="RefSeq" id="NP_445670.1">
    <property type="nucleotide sequence ID" value="NC_003214.2"/>
</dbReference>
<dbReference type="SMR" id="Q914M5"/>
<dbReference type="GeneID" id="922281"/>
<dbReference type="KEGG" id="vg:922281"/>
<dbReference type="Proteomes" id="UP000007017">
    <property type="component" value="Segment"/>
</dbReference>
<proteinExistence type="predicted"/>
<gene>
    <name type="primary">SIFV0005</name>
</gene>
<sequence length="97" mass="11277">MINMIKKIVITTIDSPADDKNIKFLVGLAKLIGKNEISFGEDKILKRDISKNDELREIVKEIIEKYKEKVPNIVKFKEGKIKSDGKIIIRWEYENKS</sequence>